<name>6PGL3_ORYSJ</name>
<organism>
    <name type="scientific">Oryza sativa subsp. japonica</name>
    <name type="common">Rice</name>
    <dbReference type="NCBI Taxonomy" id="39947"/>
    <lineage>
        <taxon>Eukaryota</taxon>
        <taxon>Viridiplantae</taxon>
        <taxon>Streptophyta</taxon>
        <taxon>Embryophyta</taxon>
        <taxon>Tracheophyta</taxon>
        <taxon>Spermatophyta</taxon>
        <taxon>Magnoliopsida</taxon>
        <taxon>Liliopsida</taxon>
        <taxon>Poales</taxon>
        <taxon>Poaceae</taxon>
        <taxon>BOP clade</taxon>
        <taxon>Oryzoideae</taxon>
        <taxon>Oryzeae</taxon>
        <taxon>Oryzinae</taxon>
        <taxon>Oryza</taxon>
        <taxon>Oryza sativa</taxon>
    </lineage>
</organism>
<sequence length="327" mass="34587">MSASAAVSSTCAAASSTTSRRSSSSPASRVQATPRRSLPSRLVASRTSPRSPVVPPVYATASPGGAGGTTAAAARKKLLIFDAEEYLAESLAKYTARLSGEAVAERGAFTVALSGGSLIKALRKLTESPYLEAVEWSKWHVFWVDERVVPKDHADSNYKLAMDGLLSKVPIPASQIYAINDTLSAEGAADEYETCLKQLVNDGVVAISEVTGFPKLDLMLLGMGPDGHVASLFPGHPVVNENLKWVSYIKDSPKPPPERITFTFPLVNSSAHIALVVTGAGKAGAVHKAFSDKQSSSDLLPVEMVSQQEGVLTWFTDKPAVSMLSSI</sequence>
<reference key="1">
    <citation type="journal article" date="2005" name="Nature">
        <title>The map-based sequence of the rice genome.</title>
        <authorList>
            <consortium name="International rice genome sequencing project (IRGSP)"/>
        </authorList>
    </citation>
    <scope>NUCLEOTIDE SEQUENCE [LARGE SCALE GENOMIC DNA]</scope>
    <source>
        <strain>cv. Nipponbare</strain>
    </source>
</reference>
<reference key="2">
    <citation type="journal article" date="2008" name="Nucleic Acids Res.">
        <title>The rice annotation project database (RAP-DB): 2008 update.</title>
        <authorList>
            <consortium name="The rice annotation project (RAP)"/>
        </authorList>
    </citation>
    <scope>GENOME REANNOTATION</scope>
    <source>
        <strain>cv. Nipponbare</strain>
    </source>
</reference>
<reference key="3">
    <citation type="journal article" date="2013" name="Rice">
        <title>Improvement of the Oryza sativa Nipponbare reference genome using next generation sequence and optical map data.</title>
        <authorList>
            <person name="Kawahara Y."/>
            <person name="de la Bastide M."/>
            <person name="Hamilton J.P."/>
            <person name="Kanamori H."/>
            <person name="McCombie W.R."/>
            <person name="Ouyang S."/>
            <person name="Schwartz D.C."/>
            <person name="Tanaka T."/>
            <person name="Wu J."/>
            <person name="Zhou S."/>
            <person name="Childs K.L."/>
            <person name="Davidson R.M."/>
            <person name="Lin H."/>
            <person name="Quesada-Ocampo L."/>
            <person name="Vaillancourt B."/>
            <person name="Sakai H."/>
            <person name="Lee S.S."/>
            <person name="Kim J."/>
            <person name="Numa H."/>
            <person name="Itoh T."/>
            <person name="Buell C.R."/>
            <person name="Matsumoto T."/>
        </authorList>
    </citation>
    <scope>GENOME REANNOTATION</scope>
    <source>
        <strain>cv. Nipponbare</strain>
    </source>
</reference>
<reference key="4">
    <citation type="journal article" date="2005" name="PLoS Biol.">
        <title>The genomes of Oryza sativa: a history of duplications.</title>
        <authorList>
            <person name="Yu J."/>
            <person name="Wang J."/>
            <person name="Lin W."/>
            <person name="Li S."/>
            <person name="Li H."/>
            <person name="Zhou J."/>
            <person name="Ni P."/>
            <person name="Dong W."/>
            <person name="Hu S."/>
            <person name="Zeng C."/>
            <person name="Zhang J."/>
            <person name="Zhang Y."/>
            <person name="Li R."/>
            <person name="Xu Z."/>
            <person name="Li S."/>
            <person name="Li X."/>
            <person name="Zheng H."/>
            <person name="Cong L."/>
            <person name="Lin L."/>
            <person name="Yin J."/>
            <person name="Geng J."/>
            <person name="Li G."/>
            <person name="Shi J."/>
            <person name="Liu J."/>
            <person name="Lv H."/>
            <person name="Li J."/>
            <person name="Wang J."/>
            <person name="Deng Y."/>
            <person name="Ran L."/>
            <person name="Shi X."/>
            <person name="Wang X."/>
            <person name="Wu Q."/>
            <person name="Li C."/>
            <person name="Ren X."/>
            <person name="Wang J."/>
            <person name="Wang X."/>
            <person name="Li D."/>
            <person name="Liu D."/>
            <person name="Zhang X."/>
            <person name="Ji Z."/>
            <person name="Zhao W."/>
            <person name="Sun Y."/>
            <person name="Zhang Z."/>
            <person name="Bao J."/>
            <person name="Han Y."/>
            <person name="Dong L."/>
            <person name="Ji J."/>
            <person name="Chen P."/>
            <person name="Wu S."/>
            <person name="Liu J."/>
            <person name="Xiao Y."/>
            <person name="Bu D."/>
            <person name="Tan J."/>
            <person name="Yang L."/>
            <person name="Ye C."/>
            <person name="Zhang J."/>
            <person name="Xu J."/>
            <person name="Zhou Y."/>
            <person name="Yu Y."/>
            <person name="Zhang B."/>
            <person name="Zhuang S."/>
            <person name="Wei H."/>
            <person name="Liu B."/>
            <person name="Lei M."/>
            <person name="Yu H."/>
            <person name="Li Y."/>
            <person name="Xu H."/>
            <person name="Wei S."/>
            <person name="He X."/>
            <person name="Fang L."/>
            <person name="Zhang Z."/>
            <person name="Zhang Y."/>
            <person name="Huang X."/>
            <person name="Su Z."/>
            <person name="Tong W."/>
            <person name="Li J."/>
            <person name="Tong Z."/>
            <person name="Li S."/>
            <person name="Ye J."/>
            <person name="Wang L."/>
            <person name="Fang L."/>
            <person name="Lei T."/>
            <person name="Chen C.-S."/>
            <person name="Chen H.-C."/>
            <person name="Xu Z."/>
            <person name="Li H."/>
            <person name="Huang H."/>
            <person name="Zhang F."/>
            <person name="Xu H."/>
            <person name="Li N."/>
            <person name="Zhao C."/>
            <person name="Li S."/>
            <person name="Dong L."/>
            <person name="Huang Y."/>
            <person name="Li L."/>
            <person name="Xi Y."/>
            <person name="Qi Q."/>
            <person name="Li W."/>
            <person name="Zhang B."/>
            <person name="Hu W."/>
            <person name="Zhang Y."/>
            <person name="Tian X."/>
            <person name="Jiao Y."/>
            <person name="Liang X."/>
            <person name="Jin J."/>
            <person name="Gao L."/>
            <person name="Zheng W."/>
            <person name="Hao B."/>
            <person name="Liu S.-M."/>
            <person name="Wang W."/>
            <person name="Yuan L."/>
            <person name="Cao M."/>
            <person name="McDermott J."/>
            <person name="Samudrala R."/>
            <person name="Wang J."/>
            <person name="Wong G.K.-S."/>
            <person name="Yang H."/>
        </authorList>
    </citation>
    <scope>NUCLEOTIDE SEQUENCE [LARGE SCALE GENOMIC DNA]</scope>
    <source>
        <strain>cv. Nipponbare</strain>
    </source>
</reference>
<reference key="5">
    <citation type="journal article" date="2003" name="Science">
        <title>Collection, mapping, and annotation of over 28,000 cDNA clones from japonica rice.</title>
        <authorList>
            <consortium name="The rice full-length cDNA consortium"/>
        </authorList>
    </citation>
    <scope>NUCLEOTIDE SEQUENCE [LARGE SCALE MRNA]</scope>
    <source>
        <strain>cv. Nipponbare</strain>
    </source>
</reference>
<keyword id="KW-0150">Chloroplast</keyword>
<keyword id="KW-0378">Hydrolase</keyword>
<keyword id="KW-0934">Plastid</keyword>
<keyword id="KW-1185">Reference proteome</keyword>
<keyword id="KW-0809">Transit peptide</keyword>
<protein>
    <recommendedName>
        <fullName>Probable 6-phosphogluconolactonase 3, chloroplastic</fullName>
        <shortName>6PGL 3</shortName>
        <ecNumber>3.1.1.31</ecNumber>
    </recommendedName>
</protein>
<dbReference type="EC" id="3.1.1.31"/>
<dbReference type="EMBL" id="AP004704">
    <property type="protein sequence ID" value="BAD09931.1"/>
    <property type="molecule type" value="Genomic_DNA"/>
</dbReference>
<dbReference type="EMBL" id="AP008214">
    <property type="protein sequence ID" value="BAF24340.1"/>
    <property type="molecule type" value="Genomic_DNA"/>
</dbReference>
<dbReference type="EMBL" id="AP014964">
    <property type="protein sequence ID" value="BAT06550.1"/>
    <property type="molecule type" value="Genomic_DNA"/>
</dbReference>
<dbReference type="EMBL" id="CM000145">
    <property type="protein sequence ID" value="EEE69107.1"/>
    <property type="molecule type" value="Genomic_DNA"/>
</dbReference>
<dbReference type="EMBL" id="AK109374">
    <property type="status" value="NOT_ANNOTATED_CDS"/>
    <property type="molecule type" value="mRNA"/>
</dbReference>
<dbReference type="SMR" id="Q6Z9C3"/>
<dbReference type="FunCoup" id="Q6Z9C3">
    <property type="interactions" value="2637"/>
</dbReference>
<dbReference type="STRING" id="39947.Q6Z9C3"/>
<dbReference type="PaxDb" id="39947-Q6Z9C3"/>
<dbReference type="EnsemblPlants" id="Os08t0547100-02">
    <property type="protein sequence ID" value="Os08t0547100-02"/>
    <property type="gene ID" value="Os08g0547100"/>
</dbReference>
<dbReference type="EnsemblPlants" id="Os08t0547100-03">
    <property type="protein sequence ID" value="Os08t0547100-03"/>
    <property type="gene ID" value="Os08g0547100"/>
</dbReference>
<dbReference type="Gramene" id="Os08t0547100-02">
    <property type="protein sequence ID" value="Os08t0547100-02"/>
    <property type="gene ID" value="Os08g0547100"/>
</dbReference>
<dbReference type="Gramene" id="Os08t0547100-03">
    <property type="protein sequence ID" value="Os08t0547100-03"/>
    <property type="gene ID" value="Os08g0547100"/>
</dbReference>
<dbReference type="KEGG" id="dosa:Os08g0547100"/>
<dbReference type="eggNOG" id="KOG3147">
    <property type="taxonomic scope" value="Eukaryota"/>
</dbReference>
<dbReference type="HOGENOM" id="CLU_053947_0_0_1"/>
<dbReference type="InParanoid" id="Q6Z9C3"/>
<dbReference type="OMA" id="KLAWCLP"/>
<dbReference type="UniPathway" id="UPA00115">
    <property type="reaction ID" value="UER00409"/>
</dbReference>
<dbReference type="Proteomes" id="UP000000763">
    <property type="component" value="Chromosome 8"/>
</dbReference>
<dbReference type="Proteomes" id="UP000007752">
    <property type="component" value="Chromosome 8"/>
</dbReference>
<dbReference type="Proteomes" id="UP000059680">
    <property type="component" value="Chromosome 8"/>
</dbReference>
<dbReference type="ExpressionAtlas" id="Q6Z9C3">
    <property type="expression patterns" value="baseline and differential"/>
</dbReference>
<dbReference type="GO" id="GO:0009507">
    <property type="term" value="C:chloroplast"/>
    <property type="evidence" value="ECO:0007669"/>
    <property type="project" value="UniProtKB-SubCell"/>
</dbReference>
<dbReference type="GO" id="GO:0005829">
    <property type="term" value="C:cytosol"/>
    <property type="evidence" value="ECO:0000318"/>
    <property type="project" value="GO_Central"/>
</dbReference>
<dbReference type="GO" id="GO:0017057">
    <property type="term" value="F:6-phosphogluconolactonase activity"/>
    <property type="evidence" value="ECO:0000318"/>
    <property type="project" value="GO_Central"/>
</dbReference>
<dbReference type="GO" id="GO:0005975">
    <property type="term" value="P:carbohydrate metabolic process"/>
    <property type="evidence" value="ECO:0007669"/>
    <property type="project" value="InterPro"/>
</dbReference>
<dbReference type="GO" id="GO:0009051">
    <property type="term" value="P:pentose-phosphate shunt, oxidative branch"/>
    <property type="evidence" value="ECO:0000318"/>
    <property type="project" value="GO_Central"/>
</dbReference>
<dbReference type="CDD" id="cd01400">
    <property type="entry name" value="6PGL"/>
    <property type="match status" value="1"/>
</dbReference>
<dbReference type="FunFam" id="3.40.50.1360:FF:000009">
    <property type="entry name" value="Probable 6-phosphogluconolactonase"/>
    <property type="match status" value="1"/>
</dbReference>
<dbReference type="Gene3D" id="3.40.50.1360">
    <property type="match status" value="1"/>
</dbReference>
<dbReference type="InterPro" id="IPR005900">
    <property type="entry name" value="6-phosphogluconolactonase_DevB"/>
</dbReference>
<dbReference type="InterPro" id="IPR006148">
    <property type="entry name" value="Glc/Gal-6P_isomerase"/>
</dbReference>
<dbReference type="InterPro" id="IPR037171">
    <property type="entry name" value="NagB/RpiA_transferase-like"/>
</dbReference>
<dbReference type="InterPro" id="IPR039104">
    <property type="entry name" value="PGLS"/>
</dbReference>
<dbReference type="NCBIfam" id="TIGR01198">
    <property type="entry name" value="pgl"/>
    <property type="match status" value="1"/>
</dbReference>
<dbReference type="PANTHER" id="PTHR11054">
    <property type="entry name" value="6-PHOSPHOGLUCONOLACTONASE"/>
    <property type="match status" value="1"/>
</dbReference>
<dbReference type="PANTHER" id="PTHR11054:SF3">
    <property type="entry name" value="6-PHOSPHOGLUCONOLACTONASE 3, CHLOROPLASTIC-RELATED"/>
    <property type="match status" value="1"/>
</dbReference>
<dbReference type="Pfam" id="PF01182">
    <property type="entry name" value="Glucosamine_iso"/>
    <property type="match status" value="1"/>
</dbReference>
<dbReference type="SUPFAM" id="SSF100950">
    <property type="entry name" value="NagB/RpiA/CoA transferase-like"/>
    <property type="match status" value="1"/>
</dbReference>
<evidence type="ECO:0000250" key="1"/>
<evidence type="ECO:0000255" key="2"/>
<evidence type="ECO:0000256" key="3">
    <source>
        <dbReference type="SAM" id="MobiDB-lite"/>
    </source>
</evidence>
<evidence type="ECO:0000305" key="4"/>
<evidence type="ECO:0000312" key="5">
    <source>
        <dbReference type="EMBL" id="EEE69107.1"/>
    </source>
</evidence>
<proteinExistence type="evidence at transcript level"/>
<feature type="transit peptide" description="Chloroplast" evidence="2">
    <location>
        <begin position="1"/>
        <end position="71"/>
    </location>
</feature>
<feature type="chain" id="PRO_0000288678" description="Probable 6-phosphogluconolactonase 3, chloroplastic">
    <location>
        <begin position="72"/>
        <end position="327"/>
    </location>
</feature>
<feature type="region of interest" description="Disordered" evidence="3">
    <location>
        <begin position="1"/>
        <end position="66"/>
    </location>
</feature>
<feature type="compositionally biased region" description="Low complexity" evidence="3">
    <location>
        <begin position="1"/>
        <end position="29"/>
    </location>
</feature>
<feature type="compositionally biased region" description="Low complexity" evidence="3">
    <location>
        <begin position="43"/>
        <end position="66"/>
    </location>
</feature>
<accession>Q6Z9C3</accession>
<accession>A3BVG6</accession>
<accession>B9FYF6</accession>
<comment type="function">
    <text evidence="1">Hydrolysis of 6-phosphogluconolactone to 6-phosphogluconate.</text>
</comment>
<comment type="catalytic activity">
    <reaction>
        <text>6-phospho-D-glucono-1,5-lactone + H2O = 6-phospho-D-gluconate + H(+)</text>
        <dbReference type="Rhea" id="RHEA:12556"/>
        <dbReference type="ChEBI" id="CHEBI:15377"/>
        <dbReference type="ChEBI" id="CHEBI:15378"/>
        <dbReference type="ChEBI" id="CHEBI:57955"/>
        <dbReference type="ChEBI" id="CHEBI:58759"/>
        <dbReference type="EC" id="3.1.1.31"/>
    </reaction>
</comment>
<comment type="pathway">
    <text>Carbohydrate degradation; pentose phosphate pathway; D-ribulose 5-phosphate from D-glucose 6-phosphate (oxidative stage): step 2/3.</text>
</comment>
<comment type="subcellular location">
    <subcellularLocation>
        <location evidence="4">Plastid</location>
        <location evidence="4">Chloroplast</location>
    </subcellularLocation>
</comment>
<comment type="similarity">
    <text evidence="4">Belongs to the glucosamine/galactosamine-6-phosphate isomerase family. 6-phosphogluconolactonase subfamily.</text>
</comment>
<gene>
    <name type="ordered locus">Os08g0547100</name>
    <name type="ordered locus">LOC_Os08g43370</name>
    <name type="ORF">OsJ_027038</name>
    <name evidence="5" type="ORF">OsJ_28176</name>
    <name type="ORF">P0544G09.8</name>
</gene>